<organism>
    <name type="scientific">Human papillomavirus 39</name>
    <dbReference type="NCBI Taxonomy" id="10588"/>
    <lineage>
        <taxon>Viruses</taxon>
        <taxon>Monodnaviria</taxon>
        <taxon>Shotokuvirae</taxon>
        <taxon>Cossaviricota</taxon>
        <taxon>Papovaviricetes</taxon>
        <taxon>Zurhausenvirales</taxon>
        <taxon>Papillomaviridae</taxon>
        <taxon>Firstpapillomavirinae</taxon>
        <taxon>Alphapapillomavirus</taxon>
        <taxon>Alphapapillomavirus 7</taxon>
    </lineage>
</organism>
<reference key="1">
    <citation type="journal article" date="1991" name="Virology">
        <title>Genome organization and nucleotide sequence of human papillomavirus type 39.</title>
        <authorList>
            <person name="Volpers C."/>
            <person name="Streeck R.E."/>
        </authorList>
    </citation>
    <scope>NUCLEOTIDE SEQUENCE [GENOMIC DNA]</scope>
</reference>
<organismHost>
    <name type="scientific">Homo sapiens</name>
    <name type="common">Human</name>
    <dbReference type="NCBI Taxonomy" id="9606"/>
</organismHost>
<comment type="function">
    <text evidence="1">Minor protein of the capsid that localizes along the inner surface of the virion, within the central cavities beneath the L1 pentamers. Plays a role in capsid stabilization through interaction with the major capsid protein L1. Once the virion enters the host cell, L2 escorts the genomic DNA into the nucleus by promoting escape from the endosomal compartments and traffic through the host Golgi network. Mechanistically, the C-terminus of L2 possesses a cell-penetrating peptide that protudes from the host endosome, interacts with host cytoplasmic retromer cargo and thereby mediates the capsid delivery to the host trans-Golgi network. Plays a role through its interaction with host dynein in the intracellular microtubule-dependent transport of viral capsid toward the nucleus. Mediates the viral genome import into the nucleus through binding to host importins. Once within the nucleus, L2 localizes viral genomes to host PML bodies in order to activate early gene expression for establishment of infection. Later on, promotes late gene expression by interacting with the viral E2 protein and by inhibiting its transcriptional activation functions. During virion assembly, encapsidates the genome by direct interaction with the viral DNA.</text>
</comment>
<comment type="subunit">
    <text evidence="1">Interacts with major capsid protein L1. Interacts with E2; this interaction inhibits E2 transcriptional activity but not the DNA replication function E2. Interacts with host GADD45GIP1. Interacts with host HSPA8; this interaction is required for L2 nuclear translocation. Interacts with host importins KPNB2 and KPNB3. Forms a complex with importin alpha2-beta1 heterodimers via interaction with the importin alpha2 adapter. Interacts with host DYNLT1; this interaction is essential for virus intracellular transport during entry. Interacts (via C-terminus) with host retromer subunits VPS35 and VPS29.</text>
</comment>
<comment type="subcellular location">
    <subcellularLocation>
        <location evidence="1">Virion</location>
    </subcellularLocation>
    <subcellularLocation>
        <location evidence="1">Host nucleus</location>
    </subcellularLocation>
    <subcellularLocation>
        <location evidence="1">Host early endosome</location>
    </subcellularLocation>
    <subcellularLocation>
        <location evidence="1">Host Golgi apparatus</location>
    </subcellularLocation>
</comment>
<comment type="PTM">
    <text evidence="1">Highly phosphorylated.</text>
</comment>
<comment type="similarity">
    <text evidence="1">Belongs to the papillomaviridae L2 protein family.</text>
</comment>
<sequence>MVSHRAARRKRASATDLYRTCKQSGTCPPDVVDKVEGTTLADKILQWTSLGIFLGGLGIGTGTGTGGRTGYIPLGGRPNTVVDVSPARPPVVIEPVGPSEPSIVQLVEDSSVITSGTPVPTFTGTSGFEITSSSTTTPAVLDITPSSGSVQITSTSYTNPAFTDPSLIEVPQTGETSGNIFVSTPTSGTHGYEEIPMEVFATHGTGTEPISSTPTPGISRVAGPRLYSRAHQQVRVSNFDFVTHPSSFVTFDNPAFEPVDTTLTYEAADIAPDPDFLDIVRLHRPALTSRKGTVRFSRLGKKATMVTRRGTQIGAQVHYYHDISSIAPAESIELQPLVHAEPSDASDALFDIYADVDNNTYLDTAFNNTRDSGTTYNTGSLPSVASSASTKYANTTIPFSTSWNMPVNTGPDIALPSTTPQLPLVPSGPIDTTYAITIQGSNYYLLPLLYFFLKKRKRIPYFFSDGYVAV</sequence>
<feature type="chain" id="PRO_0000133606" description="Minor capsid protein L2">
    <location>
        <begin position="1"/>
        <end position="470"/>
    </location>
</feature>
<feature type="short sequence motif" description="Nuclear localization signal" evidence="1">
    <location>
        <begin position="1"/>
        <end position="12"/>
    </location>
</feature>
<feature type="short sequence motif" description="Nuclear localization signal" evidence="1">
    <location>
        <begin position="451"/>
        <end position="459"/>
    </location>
</feature>
<feature type="disulfide bond" evidence="1">
    <location>
        <begin position="21"/>
        <end position="27"/>
    </location>
</feature>
<keyword id="KW-0167">Capsid protein</keyword>
<keyword id="KW-1176">Cytoplasmic inwards viral transport</keyword>
<keyword id="KW-1015">Disulfide bond</keyword>
<keyword id="KW-0238">DNA-binding</keyword>
<keyword id="KW-1039">Host endosome</keyword>
<keyword id="KW-1040">Host Golgi apparatus</keyword>
<keyword id="KW-1048">Host nucleus</keyword>
<keyword id="KW-0945">Host-virus interaction</keyword>
<keyword id="KW-0426">Late protein</keyword>
<keyword id="KW-1177">Microtubular inwards viral transport</keyword>
<keyword id="KW-0597">Phosphoprotein</keyword>
<keyword id="KW-1185">Reference proteome</keyword>
<keyword id="KW-1163">Viral penetration into host nucleus</keyword>
<keyword id="KW-0946">Virion</keyword>
<keyword id="KW-1160">Virus entry into host cell</keyword>
<proteinExistence type="inferred from homology"/>
<evidence type="ECO:0000255" key="1">
    <source>
        <dbReference type="HAMAP-Rule" id="MF_04003"/>
    </source>
</evidence>
<name>VL2_HPV39</name>
<protein>
    <recommendedName>
        <fullName evidence="1">Minor capsid protein L2</fullName>
    </recommendedName>
</protein>
<dbReference type="EMBL" id="M62849">
    <property type="protein sequence ID" value="AAA47055.1"/>
    <property type="molecule type" value="Genomic_DNA"/>
</dbReference>
<dbReference type="PIR" id="G38502">
    <property type="entry name" value="P2WL39"/>
</dbReference>
<dbReference type="Proteomes" id="UP000009120">
    <property type="component" value="Genome"/>
</dbReference>
<dbReference type="GO" id="GO:0043657">
    <property type="term" value="C:host cell"/>
    <property type="evidence" value="ECO:0007669"/>
    <property type="project" value="GOC"/>
</dbReference>
<dbReference type="GO" id="GO:0044174">
    <property type="term" value="C:host cell endosome"/>
    <property type="evidence" value="ECO:0007669"/>
    <property type="project" value="UniProtKB-KW"/>
</dbReference>
<dbReference type="GO" id="GO:0044177">
    <property type="term" value="C:host cell Golgi apparatus"/>
    <property type="evidence" value="ECO:0007669"/>
    <property type="project" value="UniProtKB-SubCell"/>
</dbReference>
<dbReference type="GO" id="GO:0042025">
    <property type="term" value="C:host cell nucleus"/>
    <property type="evidence" value="ECO:0007669"/>
    <property type="project" value="UniProtKB-SubCell"/>
</dbReference>
<dbReference type="GO" id="GO:0019028">
    <property type="term" value="C:viral capsid"/>
    <property type="evidence" value="ECO:0007669"/>
    <property type="project" value="UniProtKB-UniRule"/>
</dbReference>
<dbReference type="GO" id="GO:0003677">
    <property type="term" value="F:DNA binding"/>
    <property type="evidence" value="ECO:0007669"/>
    <property type="project" value="UniProtKB-UniRule"/>
</dbReference>
<dbReference type="GO" id="GO:0005198">
    <property type="term" value="F:structural molecule activity"/>
    <property type="evidence" value="ECO:0007669"/>
    <property type="project" value="UniProtKB-UniRule"/>
</dbReference>
<dbReference type="GO" id="GO:0075521">
    <property type="term" value="P:microtubule-dependent intracellular transport of viral material towards nucleus"/>
    <property type="evidence" value="ECO:0007669"/>
    <property type="project" value="UniProtKB-UniRule"/>
</dbReference>
<dbReference type="GO" id="GO:0046718">
    <property type="term" value="P:symbiont entry into host cell"/>
    <property type="evidence" value="ECO:0007669"/>
    <property type="project" value="UniProtKB-KW"/>
</dbReference>
<dbReference type="GO" id="GO:0075732">
    <property type="term" value="P:viral penetration into host nucleus"/>
    <property type="evidence" value="ECO:0007669"/>
    <property type="project" value="UniProtKB-KW"/>
</dbReference>
<dbReference type="HAMAP" id="MF_04003">
    <property type="entry name" value="PPV_L2"/>
    <property type="match status" value="1"/>
</dbReference>
<dbReference type="InterPro" id="IPR000784">
    <property type="entry name" value="Late_L2"/>
</dbReference>
<dbReference type="Pfam" id="PF00513">
    <property type="entry name" value="Late_protein_L2"/>
    <property type="match status" value="1"/>
</dbReference>
<gene>
    <name evidence="1" type="primary">L2</name>
</gene>
<accession>P24839</accession>